<proteinExistence type="evidence at protein level"/>
<name>CIPKF_ARATH</name>
<reference key="1">
    <citation type="journal article" date="1994" name="Plant Physiol.">
        <title>Cloning and sequencing of a novel serine/threonine protein kinase in Arabidopsis thaliana.</title>
        <authorList>
            <person name="Mizoguchi T."/>
            <person name="Hayashida N."/>
            <person name="Yamaguchi-Shinozaki K."/>
            <person name="Kamada H."/>
            <person name="Shinozaki K."/>
        </authorList>
    </citation>
    <scope>NUCLEOTIDE SEQUENCE [MRNA]</scope>
    <scope>TISSUE SPECIFICITY</scope>
    <source>
        <strain>cv. Columbia</strain>
    </source>
</reference>
<reference key="2">
    <citation type="journal article" date="2001" name="EMBO J.">
        <title>The NAF domain defines a novel protein-protein interaction module conserved in Ca(2+)-regulated kinases.</title>
        <authorList>
            <person name="Albrecht V."/>
            <person name="Ritz O."/>
            <person name="Linder S."/>
            <person name="Harter K."/>
            <person name="Kudla J."/>
        </authorList>
    </citation>
    <scope>NUCLEOTIDE SEQUENCE [MRNA]</scope>
</reference>
<reference key="3">
    <citation type="journal article" date="2001" name="Plant Cell">
        <title>Molecular characterization of functional domains in the protein kinase SOS2 that is required for plant salt tolerance.</title>
        <authorList>
            <person name="Guo Y."/>
            <person name="Halfter U."/>
            <person name="Ishitani M."/>
            <person name="Zhu J.-K."/>
        </authorList>
    </citation>
    <scope>NUCLEOTIDE SEQUENCE [MRNA]</scope>
    <scope>TISSUE SPECIFICITY</scope>
    <scope>INDUCTION</scope>
    <source>
        <strain>cv. Columbia</strain>
    </source>
</reference>
<reference key="4">
    <citation type="journal article" date="2000" name="Nature">
        <title>Sequence and analysis of chromosome 5 of the plant Arabidopsis thaliana.</title>
        <authorList>
            <person name="Tabata S."/>
            <person name="Kaneko T."/>
            <person name="Nakamura Y."/>
            <person name="Kotani H."/>
            <person name="Kato T."/>
            <person name="Asamizu E."/>
            <person name="Miyajima N."/>
            <person name="Sasamoto S."/>
            <person name="Kimura T."/>
            <person name="Hosouchi T."/>
            <person name="Kawashima K."/>
            <person name="Kohara M."/>
            <person name="Matsumoto M."/>
            <person name="Matsuno A."/>
            <person name="Muraki A."/>
            <person name="Nakayama S."/>
            <person name="Nakazaki N."/>
            <person name="Naruo K."/>
            <person name="Okumura S."/>
            <person name="Shinpo S."/>
            <person name="Takeuchi C."/>
            <person name="Wada T."/>
            <person name="Watanabe A."/>
            <person name="Yamada M."/>
            <person name="Yasuda M."/>
            <person name="Sato S."/>
            <person name="de la Bastide M."/>
            <person name="Huang E."/>
            <person name="Spiegel L."/>
            <person name="Gnoj L."/>
            <person name="O'Shaughnessy A."/>
            <person name="Preston R."/>
            <person name="Habermann K."/>
            <person name="Murray J."/>
            <person name="Johnson D."/>
            <person name="Rohlfing T."/>
            <person name="Nelson J."/>
            <person name="Stoneking T."/>
            <person name="Pepin K."/>
            <person name="Spieth J."/>
            <person name="Sekhon M."/>
            <person name="Armstrong J."/>
            <person name="Becker M."/>
            <person name="Belter E."/>
            <person name="Cordum H."/>
            <person name="Cordes M."/>
            <person name="Courtney L."/>
            <person name="Courtney W."/>
            <person name="Dante M."/>
            <person name="Du H."/>
            <person name="Edwards J."/>
            <person name="Fryman J."/>
            <person name="Haakensen B."/>
            <person name="Lamar E."/>
            <person name="Latreille P."/>
            <person name="Leonard S."/>
            <person name="Meyer R."/>
            <person name="Mulvaney E."/>
            <person name="Ozersky P."/>
            <person name="Riley A."/>
            <person name="Strowmatt C."/>
            <person name="Wagner-McPherson C."/>
            <person name="Wollam A."/>
            <person name="Yoakum M."/>
            <person name="Bell M."/>
            <person name="Dedhia N."/>
            <person name="Parnell L."/>
            <person name="Shah R."/>
            <person name="Rodriguez M."/>
            <person name="Hoon See L."/>
            <person name="Vil D."/>
            <person name="Baker J."/>
            <person name="Kirchoff K."/>
            <person name="Toth K."/>
            <person name="King L."/>
            <person name="Bahret A."/>
            <person name="Miller B."/>
            <person name="Marra M.A."/>
            <person name="Martienssen R."/>
            <person name="McCombie W.R."/>
            <person name="Wilson R.K."/>
            <person name="Murphy G."/>
            <person name="Bancroft I."/>
            <person name="Volckaert G."/>
            <person name="Wambutt R."/>
            <person name="Duesterhoeft A."/>
            <person name="Stiekema W."/>
            <person name="Pohl T."/>
            <person name="Entian K.-D."/>
            <person name="Terryn N."/>
            <person name="Hartley N."/>
            <person name="Bent E."/>
            <person name="Johnson S."/>
            <person name="Langham S.-A."/>
            <person name="McCullagh B."/>
            <person name="Robben J."/>
            <person name="Grymonprez B."/>
            <person name="Zimmermann W."/>
            <person name="Ramsperger U."/>
            <person name="Wedler H."/>
            <person name="Balke K."/>
            <person name="Wedler E."/>
            <person name="Peters S."/>
            <person name="van Staveren M."/>
            <person name="Dirkse W."/>
            <person name="Mooijman P."/>
            <person name="Klein Lankhorst R."/>
            <person name="Weitzenegger T."/>
            <person name="Bothe G."/>
            <person name="Rose M."/>
            <person name="Hauf J."/>
            <person name="Berneiser S."/>
            <person name="Hempel S."/>
            <person name="Feldpausch M."/>
            <person name="Lamberth S."/>
            <person name="Villarroel R."/>
            <person name="Gielen J."/>
            <person name="Ardiles W."/>
            <person name="Bents O."/>
            <person name="Lemcke K."/>
            <person name="Kolesov G."/>
            <person name="Mayer K.F.X."/>
            <person name="Rudd S."/>
            <person name="Schoof H."/>
            <person name="Schueller C."/>
            <person name="Zaccaria P."/>
            <person name="Mewes H.-W."/>
            <person name="Bevan M."/>
            <person name="Fransz P.F."/>
        </authorList>
    </citation>
    <scope>NUCLEOTIDE SEQUENCE [LARGE SCALE GENOMIC DNA]</scope>
    <source>
        <strain>cv. Columbia</strain>
    </source>
</reference>
<reference key="5">
    <citation type="journal article" date="2017" name="Plant J.">
        <title>Araport11: a complete reannotation of the Arabidopsis thaliana reference genome.</title>
        <authorList>
            <person name="Cheng C.Y."/>
            <person name="Krishnakumar V."/>
            <person name="Chan A.P."/>
            <person name="Thibaud-Nissen F."/>
            <person name="Schobel S."/>
            <person name="Town C.D."/>
        </authorList>
    </citation>
    <scope>GENOME REANNOTATION</scope>
    <source>
        <strain>cv. Columbia</strain>
    </source>
</reference>
<reference key="6">
    <citation type="submission" date="2006-07" db="EMBL/GenBank/DDBJ databases">
        <title>Large-scale analysis of RIKEN Arabidopsis full-length (RAFL) cDNAs.</title>
        <authorList>
            <person name="Totoki Y."/>
            <person name="Seki M."/>
            <person name="Ishida J."/>
            <person name="Nakajima M."/>
            <person name="Enju A."/>
            <person name="Kamiya A."/>
            <person name="Narusaka M."/>
            <person name="Shin-i T."/>
            <person name="Nakagawa M."/>
            <person name="Sakamoto N."/>
            <person name="Oishi K."/>
            <person name="Kohara Y."/>
            <person name="Kobayashi M."/>
            <person name="Toyoda A."/>
            <person name="Sakaki Y."/>
            <person name="Sakurai T."/>
            <person name="Iida K."/>
            <person name="Akiyama K."/>
            <person name="Satou M."/>
            <person name="Toyoda T."/>
            <person name="Konagaya A."/>
            <person name="Carninci P."/>
            <person name="Kawai J."/>
            <person name="Hayashizaki Y."/>
            <person name="Shinozaki K."/>
        </authorList>
    </citation>
    <scope>NUCLEOTIDE SEQUENCE [LARGE SCALE MRNA]</scope>
    <source>
        <strain>cv. Columbia</strain>
    </source>
</reference>
<reference key="7">
    <citation type="submission" date="2006-09" db="EMBL/GenBank/DDBJ databases">
        <title>Arabidopsis ORF clones.</title>
        <authorList>
            <person name="Bautista V.R."/>
            <person name="Kim C.J."/>
            <person name="Chen H."/>
            <person name="Quinitio C."/>
            <person name="Ecker J.R."/>
        </authorList>
    </citation>
    <scope>NUCLEOTIDE SEQUENCE [LARGE SCALE MRNA]</scope>
    <source>
        <strain>cv. Columbia</strain>
    </source>
</reference>
<reference key="8">
    <citation type="journal article" date="2000" name="Proc. Natl. Acad. Sci. U.S.A.">
        <title>The Arabidopsis SOS2 protein kinase physically interacts with and is activated by the calcium-binding protein SOS3.</title>
        <authorList>
            <person name="Halfter U."/>
            <person name="Ishitani M."/>
            <person name="Zhu J.-K."/>
        </authorList>
    </citation>
    <scope>INTERACTION WITH CBL4</scope>
</reference>
<reference key="9">
    <citation type="journal article" date="2002" name="Dev. Cell">
        <title>A calcium sensor and its interacting protein kinase are global regulators of abscisic acid signaling in Arabidopsis.</title>
        <authorList>
            <person name="Guo Y."/>
            <person name="Xiong L."/>
            <person name="Song C.-P."/>
            <person name="Gong D."/>
            <person name="Halfter U."/>
            <person name="Zhu J.-K."/>
        </authorList>
    </citation>
    <scope>FUNCTION</scope>
    <scope>TISSUE SPECIFICITY</scope>
    <scope>INTERACTION WITH CBL1; ABI1 AND ABI2</scope>
</reference>
<reference key="10">
    <citation type="journal article" date="2003" name="Plant Physiol.">
        <title>The Arabidopsis CDPK-SnRK superfamily of protein kinases.</title>
        <authorList>
            <person name="Hrabak E.M."/>
            <person name="Chan C.W.M."/>
            <person name="Gribskov M."/>
            <person name="Harper J.F."/>
            <person name="Choi J.H."/>
            <person name="Halford N."/>
            <person name="Kudla J."/>
            <person name="Luan S."/>
            <person name="Nimmo H.G."/>
            <person name="Sussman M.R."/>
            <person name="Thomas M."/>
            <person name="Walker-Simmons K."/>
            <person name="Zhu J.-K."/>
            <person name="Harmon A.C."/>
        </authorList>
    </citation>
    <scope>GENE FAMILY</scope>
    <scope>NOMENCLATURE</scope>
</reference>
<feature type="chain" id="PRO_0000085876" description="CBL-interacting serine/threonine-protein kinase 15">
    <location>
        <begin position="1"/>
        <end position="421"/>
    </location>
</feature>
<feature type="domain" description="Protein kinase" evidence="4">
    <location>
        <begin position="12"/>
        <end position="266"/>
    </location>
</feature>
<feature type="domain" description="NAF" evidence="5">
    <location>
        <begin position="299"/>
        <end position="323"/>
    </location>
</feature>
<feature type="region of interest" description="Activation loop" evidence="1">
    <location>
        <begin position="152"/>
        <end position="181"/>
    </location>
</feature>
<feature type="region of interest" description="PPI" evidence="1">
    <location>
        <begin position="328"/>
        <end position="357"/>
    </location>
</feature>
<feature type="active site" description="Proton acceptor" evidence="4 6">
    <location>
        <position position="134"/>
    </location>
</feature>
<feature type="binding site" evidence="4">
    <location>
        <begin position="18"/>
        <end position="26"/>
    </location>
    <ligand>
        <name>ATP</name>
        <dbReference type="ChEBI" id="CHEBI:30616"/>
    </ligand>
</feature>
<feature type="binding site" evidence="4">
    <location>
        <position position="41"/>
    </location>
    <ligand>
        <name>ATP</name>
        <dbReference type="ChEBI" id="CHEBI:30616"/>
    </ligand>
</feature>
<feature type="modified residue" description="Phosphoserine" evidence="3">
    <location>
        <position position="156"/>
    </location>
</feature>
<feature type="modified residue" description="Phosphothreonine" evidence="2">
    <location>
        <position position="170"/>
    </location>
</feature>
<feature type="sequence conflict" description="In Ref. 1, 2 and 3." evidence="11" ref="1 2 3">
    <original>AYV</original>
    <variation>TYC</variation>
    <location>
        <begin position="176"/>
        <end position="178"/>
    </location>
</feature>
<feature type="sequence conflict" description="In Ref. 6; BAF00779." evidence="11" ref="6">
    <original>K</original>
    <variation>R</variation>
    <location>
        <position position="230"/>
    </location>
</feature>
<keyword id="KW-0025">Alternative splicing</keyword>
<keyword id="KW-0067">ATP-binding</keyword>
<keyword id="KW-0418">Kinase</keyword>
<keyword id="KW-0464">Manganese</keyword>
<keyword id="KW-0547">Nucleotide-binding</keyword>
<keyword id="KW-0597">Phosphoprotein</keyword>
<keyword id="KW-1185">Reference proteome</keyword>
<keyword id="KW-0723">Serine/threonine-protein kinase</keyword>
<keyword id="KW-0808">Transferase</keyword>
<comment type="function">
    <text evidence="9">CIPK serine-threonine protein kinases interact with CBL proteins. Binding of a CBL protein to the regulatory NAF domain of CIPK protein lead to the activation of the kinase in a calcium-dependent manner.</text>
</comment>
<comment type="catalytic activity">
    <reaction>
        <text>L-seryl-[protein] + ATP = O-phospho-L-seryl-[protein] + ADP + H(+)</text>
        <dbReference type="Rhea" id="RHEA:17989"/>
        <dbReference type="Rhea" id="RHEA-COMP:9863"/>
        <dbReference type="Rhea" id="RHEA-COMP:11604"/>
        <dbReference type="ChEBI" id="CHEBI:15378"/>
        <dbReference type="ChEBI" id="CHEBI:29999"/>
        <dbReference type="ChEBI" id="CHEBI:30616"/>
        <dbReference type="ChEBI" id="CHEBI:83421"/>
        <dbReference type="ChEBI" id="CHEBI:456216"/>
        <dbReference type="EC" id="2.7.11.1"/>
    </reaction>
</comment>
<comment type="catalytic activity">
    <reaction>
        <text>L-threonyl-[protein] + ATP = O-phospho-L-threonyl-[protein] + ADP + H(+)</text>
        <dbReference type="Rhea" id="RHEA:46608"/>
        <dbReference type="Rhea" id="RHEA-COMP:11060"/>
        <dbReference type="Rhea" id="RHEA-COMP:11605"/>
        <dbReference type="ChEBI" id="CHEBI:15378"/>
        <dbReference type="ChEBI" id="CHEBI:30013"/>
        <dbReference type="ChEBI" id="CHEBI:30616"/>
        <dbReference type="ChEBI" id="CHEBI:61977"/>
        <dbReference type="ChEBI" id="CHEBI:456216"/>
        <dbReference type="EC" id="2.7.11.1"/>
    </reaction>
</comment>
<comment type="cofactor">
    <cofactor evidence="1">
        <name>Mn(2+)</name>
        <dbReference type="ChEBI" id="CHEBI:29035"/>
    </cofactor>
</comment>
<comment type="subunit">
    <text evidence="7 9">Interacts with CBL1/SCaBP5, CBL4/SOS3, ABI1 and ABI2.</text>
</comment>
<comment type="interaction">
    <interactant intactId="EBI-537592">
        <id>P92937</id>
    </interactant>
    <interactant intactId="EBI-4473692">
        <id>O80575</id>
        <label>At2g44050</label>
    </interactant>
    <organismsDiffer>false</organismsDiffer>
    <experiments>3</experiments>
</comment>
<comment type="interaction">
    <interactant intactId="EBI-537592">
        <id>P92937</id>
    </interactant>
    <interactant intactId="EBI-637381">
        <id>Q9LTB8</id>
        <label>CBL9</label>
    </interactant>
    <organismsDiffer>false</organismsDiffer>
    <experiments>3</experiments>
</comment>
<comment type="interaction">
    <interactant intactId="EBI-537592">
        <id>P92937</id>
    </interactant>
    <interactant intactId="EBI-25518150">
        <id>Q9LUI0</id>
        <label>FL2</label>
    </interactant>
    <organismsDiffer>false</organismsDiffer>
    <experiments>3</experiments>
</comment>
<comment type="alternative products">
    <event type="alternative splicing"/>
    <isoform>
        <id>P92937-1</id>
        <name>1</name>
        <sequence type="displayed"/>
    </isoform>
    <text>A number of isoforms are produced. According to EST sequences.</text>
</comment>
<comment type="tissue specificity">
    <text evidence="8 9 10">Ubiquitous. Co-expressed with CBL1 in guard cells.</text>
</comment>
<comment type="induction">
    <text evidence="8">Slightly repressed by salt stress.</text>
</comment>
<comment type="domain">
    <text evidence="1">The activation loop within the kinase domain is the target of phosphorylation/activation by upstream protein kinases. The PPI motif mediates the interaction with the ABI (abscisic acid-insensitive) phosphatases (By similarity).</text>
</comment>
<comment type="similarity">
    <text evidence="11">Belongs to the protein kinase superfamily. CAMK Ser/Thr protein kinase family. SNF1 subfamily.</text>
</comment>
<dbReference type="EC" id="2.7.11.1"/>
<dbReference type="EMBL" id="D30622">
    <property type="protein sequence ID" value="BAA06311.1"/>
    <property type="molecule type" value="mRNA"/>
</dbReference>
<dbReference type="EMBL" id="AF302111">
    <property type="protein sequence ID" value="AAK16692.1"/>
    <property type="molecule type" value="mRNA"/>
</dbReference>
<dbReference type="EMBL" id="AF339144">
    <property type="protein sequence ID" value="AAK26842.1"/>
    <property type="molecule type" value="mRNA"/>
</dbReference>
<dbReference type="EMBL" id="AL162351">
    <property type="protein sequence ID" value="CAB82751.1"/>
    <property type="molecule type" value="Genomic_DNA"/>
</dbReference>
<dbReference type="EMBL" id="CP002688">
    <property type="protein sequence ID" value="AED90394.1"/>
    <property type="molecule type" value="Genomic_DNA"/>
</dbReference>
<dbReference type="EMBL" id="CP002688">
    <property type="protein sequence ID" value="AED90395.1"/>
    <property type="molecule type" value="Genomic_DNA"/>
</dbReference>
<dbReference type="EMBL" id="AK228889">
    <property type="protein sequence ID" value="BAF00779.1"/>
    <property type="molecule type" value="mRNA"/>
</dbReference>
<dbReference type="EMBL" id="BT028964">
    <property type="protein sequence ID" value="ABI54339.1"/>
    <property type="molecule type" value="mRNA"/>
</dbReference>
<dbReference type="PIR" id="T48202">
    <property type="entry name" value="T48202"/>
</dbReference>
<dbReference type="RefSeq" id="NP_001031820.1">
    <molecule id="P92937-1"/>
    <property type="nucleotide sequence ID" value="NM_001036743.1"/>
</dbReference>
<dbReference type="RefSeq" id="NP_195801.1">
    <molecule id="P92937-1"/>
    <property type="nucleotide sequence ID" value="NM_120259.4"/>
</dbReference>
<dbReference type="SMR" id="P92937"/>
<dbReference type="BioGRID" id="15835">
    <property type="interactions" value="11"/>
</dbReference>
<dbReference type="FunCoup" id="P92937">
    <property type="interactions" value="982"/>
</dbReference>
<dbReference type="IntAct" id="P92937">
    <property type="interactions" value="5"/>
</dbReference>
<dbReference type="STRING" id="3702.P92937"/>
<dbReference type="PaxDb" id="3702-AT5G01810.2"/>
<dbReference type="EnsemblPlants" id="AT5G01810.1">
    <molecule id="P92937-1"/>
    <property type="protein sequence ID" value="AT5G01810.1"/>
    <property type="gene ID" value="AT5G01810"/>
</dbReference>
<dbReference type="EnsemblPlants" id="AT5G01810.2">
    <molecule id="P92937-1"/>
    <property type="protein sequence ID" value="AT5G01810.2"/>
    <property type="gene ID" value="AT5G01810"/>
</dbReference>
<dbReference type="GeneID" id="830556"/>
<dbReference type="Gramene" id="AT5G01810.1">
    <molecule id="P92937-1"/>
    <property type="protein sequence ID" value="AT5G01810.1"/>
    <property type="gene ID" value="AT5G01810"/>
</dbReference>
<dbReference type="Gramene" id="AT5G01810.2">
    <molecule id="P92937-1"/>
    <property type="protein sequence ID" value="AT5G01810.2"/>
    <property type="gene ID" value="AT5G01810"/>
</dbReference>
<dbReference type="KEGG" id="ath:AT5G01810"/>
<dbReference type="Araport" id="AT5G01810"/>
<dbReference type="TAIR" id="AT5G01810">
    <property type="gene designation" value="CIPK15"/>
</dbReference>
<dbReference type="eggNOG" id="KOG0583">
    <property type="taxonomic scope" value="Eukaryota"/>
</dbReference>
<dbReference type="InParanoid" id="P92937"/>
<dbReference type="OrthoDB" id="248923at2759"/>
<dbReference type="PhylomeDB" id="P92937"/>
<dbReference type="PRO" id="PR:P92937"/>
<dbReference type="Proteomes" id="UP000006548">
    <property type="component" value="Chromosome 5"/>
</dbReference>
<dbReference type="ExpressionAtlas" id="P92937">
    <property type="expression patterns" value="baseline and differential"/>
</dbReference>
<dbReference type="GO" id="GO:0005524">
    <property type="term" value="F:ATP binding"/>
    <property type="evidence" value="ECO:0007669"/>
    <property type="project" value="UniProtKB-KW"/>
</dbReference>
<dbReference type="GO" id="GO:0004672">
    <property type="term" value="F:protein kinase activity"/>
    <property type="evidence" value="ECO:0000250"/>
    <property type="project" value="TAIR"/>
</dbReference>
<dbReference type="GO" id="GO:0106310">
    <property type="term" value="F:protein serine kinase activity"/>
    <property type="evidence" value="ECO:0007669"/>
    <property type="project" value="RHEA"/>
</dbReference>
<dbReference type="GO" id="GO:0004674">
    <property type="term" value="F:protein serine/threonine kinase activity"/>
    <property type="evidence" value="ECO:0007669"/>
    <property type="project" value="UniProtKB-KW"/>
</dbReference>
<dbReference type="GO" id="GO:0009738">
    <property type="term" value="P:abscisic acid-activated signaling pathway"/>
    <property type="evidence" value="ECO:0000304"/>
    <property type="project" value="TAIR"/>
</dbReference>
<dbReference type="GO" id="GO:0009788">
    <property type="term" value="P:negative regulation of abscisic acid-activated signaling pathway"/>
    <property type="evidence" value="ECO:0000315"/>
    <property type="project" value="TAIR"/>
</dbReference>
<dbReference type="CDD" id="cd12195">
    <property type="entry name" value="CIPK_C"/>
    <property type="match status" value="1"/>
</dbReference>
<dbReference type="CDD" id="cd14663">
    <property type="entry name" value="STKc_SnRK3"/>
    <property type="match status" value="1"/>
</dbReference>
<dbReference type="FunFam" id="1.10.510.10:FF:000653">
    <property type="entry name" value="Non-specific serine/threonine protein kinase"/>
    <property type="match status" value="1"/>
</dbReference>
<dbReference type="FunFam" id="3.30.200.20:FF:000096">
    <property type="entry name" value="Non-specific serine/threonine protein kinase"/>
    <property type="match status" value="1"/>
</dbReference>
<dbReference type="FunFam" id="3.30.310.80:FF:000005">
    <property type="entry name" value="Non-specific serine/threonine protein kinase"/>
    <property type="match status" value="1"/>
</dbReference>
<dbReference type="Gene3D" id="3.30.310.80">
    <property type="entry name" value="Kinase associated domain 1, KA1"/>
    <property type="match status" value="1"/>
</dbReference>
<dbReference type="Gene3D" id="3.30.200.20">
    <property type="entry name" value="Phosphorylase Kinase, domain 1"/>
    <property type="match status" value="1"/>
</dbReference>
<dbReference type="Gene3D" id="1.10.510.10">
    <property type="entry name" value="Transferase(Phosphotransferase) domain 1"/>
    <property type="match status" value="1"/>
</dbReference>
<dbReference type="InterPro" id="IPR011009">
    <property type="entry name" value="Kinase-like_dom_sf"/>
</dbReference>
<dbReference type="InterPro" id="IPR018451">
    <property type="entry name" value="NAF/FISL_domain"/>
</dbReference>
<dbReference type="InterPro" id="IPR004041">
    <property type="entry name" value="NAF_dom"/>
</dbReference>
<dbReference type="InterPro" id="IPR000719">
    <property type="entry name" value="Prot_kinase_dom"/>
</dbReference>
<dbReference type="InterPro" id="IPR017441">
    <property type="entry name" value="Protein_kinase_ATP_BS"/>
</dbReference>
<dbReference type="InterPro" id="IPR008271">
    <property type="entry name" value="Ser/Thr_kinase_AS"/>
</dbReference>
<dbReference type="PANTHER" id="PTHR43895">
    <property type="entry name" value="CALCIUM/CALMODULIN-DEPENDENT PROTEIN KINASE KINASE-RELATED"/>
    <property type="match status" value="1"/>
</dbReference>
<dbReference type="PANTHER" id="PTHR43895:SF28">
    <property type="entry name" value="CBL-INTERACTING SERINE_THREONINE-PROTEIN KINASE 15"/>
    <property type="match status" value="1"/>
</dbReference>
<dbReference type="Pfam" id="PF03822">
    <property type="entry name" value="NAF"/>
    <property type="match status" value="1"/>
</dbReference>
<dbReference type="Pfam" id="PF00069">
    <property type="entry name" value="Pkinase"/>
    <property type="match status" value="1"/>
</dbReference>
<dbReference type="SMART" id="SM00220">
    <property type="entry name" value="S_TKc"/>
    <property type="match status" value="1"/>
</dbReference>
<dbReference type="SUPFAM" id="SSF56112">
    <property type="entry name" value="Protein kinase-like (PK-like)"/>
    <property type="match status" value="1"/>
</dbReference>
<dbReference type="PROSITE" id="PS50816">
    <property type="entry name" value="NAF"/>
    <property type="match status" value="1"/>
</dbReference>
<dbReference type="PROSITE" id="PS00107">
    <property type="entry name" value="PROTEIN_KINASE_ATP"/>
    <property type="match status" value="1"/>
</dbReference>
<dbReference type="PROSITE" id="PS50011">
    <property type="entry name" value="PROTEIN_KINASE_DOM"/>
    <property type="match status" value="1"/>
</dbReference>
<dbReference type="PROSITE" id="PS00108">
    <property type="entry name" value="PROTEIN_KINASE_ST"/>
    <property type="match status" value="1"/>
</dbReference>
<accession>P92937</accession>
<accession>Q0D240</accession>
<accession>Q0WQ20</accession>
<accession>Q9LZW5</accession>
<organism>
    <name type="scientific">Arabidopsis thaliana</name>
    <name type="common">Mouse-ear cress</name>
    <dbReference type="NCBI Taxonomy" id="3702"/>
    <lineage>
        <taxon>Eukaryota</taxon>
        <taxon>Viridiplantae</taxon>
        <taxon>Streptophyta</taxon>
        <taxon>Embryophyta</taxon>
        <taxon>Tracheophyta</taxon>
        <taxon>Spermatophyta</taxon>
        <taxon>Magnoliopsida</taxon>
        <taxon>eudicotyledons</taxon>
        <taxon>Gunneridae</taxon>
        <taxon>Pentapetalae</taxon>
        <taxon>rosids</taxon>
        <taxon>malvids</taxon>
        <taxon>Brassicales</taxon>
        <taxon>Brassicaceae</taxon>
        <taxon>Camelineae</taxon>
        <taxon>Arabidopsis</taxon>
    </lineage>
</organism>
<protein>
    <recommendedName>
        <fullName>CBL-interacting serine/threonine-protein kinase 15</fullName>
        <ecNumber>2.7.11.1</ecNumber>
    </recommendedName>
    <alternativeName>
        <fullName>SNF1-related kinase 3.1</fullName>
    </alternativeName>
    <alternativeName>
        <fullName>SOS-interacting protein 2</fullName>
    </alternativeName>
    <alternativeName>
        <fullName>SOS2-like protein kinase PKS3</fullName>
    </alternativeName>
    <alternativeName>
        <fullName>Serine/threonine-protein kinase ATPK10</fullName>
    </alternativeName>
</protein>
<evidence type="ECO:0000250" key="1"/>
<evidence type="ECO:0000250" key="2">
    <source>
        <dbReference type="UniProtKB" id="Q38997"/>
    </source>
</evidence>
<evidence type="ECO:0000250" key="3">
    <source>
        <dbReference type="UniProtKB" id="Q93V58"/>
    </source>
</evidence>
<evidence type="ECO:0000255" key="4">
    <source>
        <dbReference type="PROSITE-ProRule" id="PRU00159"/>
    </source>
</evidence>
<evidence type="ECO:0000255" key="5">
    <source>
        <dbReference type="PROSITE-ProRule" id="PRU00256"/>
    </source>
</evidence>
<evidence type="ECO:0000255" key="6">
    <source>
        <dbReference type="PROSITE-ProRule" id="PRU10027"/>
    </source>
</evidence>
<evidence type="ECO:0000269" key="7">
    <source>
    </source>
</evidence>
<evidence type="ECO:0000269" key="8">
    <source>
    </source>
</evidence>
<evidence type="ECO:0000269" key="9">
    <source>
    </source>
</evidence>
<evidence type="ECO:0000269" key="10">
    <source>
    </source>
</evidence>
<evidence type="ECO:0000305" key="11"/>
<gene>
    <name type="primary">CIPK15</name>
    <name type="synonym">ATPK10</name>
    <name type="synonym">PKS3</name>
    <name type="synonym">SIP2</name>
    <name type="synonym">SnRK3.1</name>
    <name type="ordered locus">At5g01810</name>
    <name type="ORF">T20L15_80</name>
</gene>
<sequence>MEKKGSVLMLRYEVGKFLGQGTFAKVYHARHLKTGDSVAIKVIDKERILKVGMTEQIKREISAMRLLRHPNIVELHEVMATKSKIYFVMEHVKGGELFNKVSTGKLREDVARKYFQQLVRAVDFCHSRGVCHRDLKPENLLLDEHGNLKISDFGLSALSDSRRQDGLLHTTCGTPAYVAPEVISRNGYDGFKADVWSCGVILFVLLAGYLPFRDSNLMELYKKIGKAEVKFPNWLAPGAKRLLKRILDPNPNTRVSTEKIMKSSWFRKGLQEEVKESVEEETEVDAEAEGNASAEKEKKRCINLNAFEIISLSTGFDLSGLFEKGEEKEEMRFTSNREASEITEKLVEIGKDLKMKVRKKEHEWRVKMSAEATVVEAEVFEIAPSYHMVVLKKSGGDTAEYKRVMKESIRPALIDFVLAWH</sequence>